<keyword id="KW-0413">Isomerase</keyword>
<keyword id="KW-1185">Reference proteome</keyword>
<keyword id="KW-0819">tRNA processing</keyword>
<reference key="1">
    <citation type="journal article" date="2002" name="Nucleic Acids Res.">
        <title>Genome sequence of Shigella flexneri 2a: insights into pathogenicity through comparison with genomes of Escherichia coli K12 and O157.</title>
        <authorList>
            <person name="Jin Q."/>
            <person name="Yuan Z."/>
            <person name="Xu J."/>
            <person name="Wang Y."/>
            <person name="Shen Y."/>
            <person name="Lu W."/>
            <person name="Wang J."/>
            <person name="Liu H."/>
            <person name="Yang J."/>
            <person name="Yang F."/>
            <person name="Zhang X."/>
            <person name="Zhang J."/>
            <person name="Yang G."/>
            <person name="Wu H."/>
            <person name="Qu D."/>
            <person name="Dong J."/>
            <person name="Sun L."/>
            <person name="Xue Y."/>
            <person name="Zhao A."/>
            <person name="Gao Y."/>
            <person name="Zhu J."/>
            <person name="Kan B."/>
            <person name="Ding K."/>
            <person name="Chen S."/>
            <person name="Cheng H."/>
            <person name="Yao Z."/>
            <person name="He B."/>
            <person name="Chen R."/>
            <person name="Ma D."/>
            <person name="Qiang B."/>
            <person name="Wen Y."/>
            <person name="Hou Y."/>
            <person name="Yu J."/>
        </authorList>
    </citation>
    <scope>NUCLEOTIDE SEQUENCE [LARGE SCALE GENOMIC DNA]</scope>
    <source>
        <strain>301 / Serotype 2a</strain>
    </source>
</reference>
<reference key="2">
    <citation type="journal article" date="2003" name="Infect. Immun.">
        <title>Complete genome sequence and comparative genomics of Shigella flexneri serotype 2a strain 2457T.</title>
        <authorList>
            <person name="Wei J."/>
            <person name="Goldberg M.B."/>
            <person name="Burland V."/>
            <person name="Venkatesan M.M."/>
            <person name="Deng W."/>
            <person name="Fournier G."/>
            <person name="Mayhew G.F."/>
            <person name="Plunkett G. III"/>
            <person name="Rose D.J."/>
            <person name="Darling A."/>
            <person name="Mau B."/>
            <person name="Perna N.T."/>
            <person name="Payne S.M."/>
            <person name="Runyen-Janecky L.J."/>
            <person name="Zhou S."/>
            <person name="Schwartz D.C."/>
            <person name="Blattner F.R."/>
        </authorList>
    </citation>
    <scope>NUCLEOTIDE SEQUENCE [LARGE SCALE GENOMIC DNA]</scope>
    <source>
        <strain>ATCC 700930 / 2457T / Serotype 2a</strain>
    </source>
</reference>
<evidence type="ECO:0000250" key="1"/>
<evidence type="ECO:0000305" key="2"/>
<proteinExistence type="inferred from homology"/>
<feature type="chain" id="PRO_0000162719" description="tRNA pseudouridine synthase C">
    <location>
        <begin position="1"/>
        <end position="260"/>
    </location>
</feature>
<feature type="active site" evidence="1">
    <location>
        <position position="54"/>
    </location>
</feature>
<organism>
    <name type="scientific">Shigella flexneri</name>
    <dbReference type="NCBI Taxonomy" id="623"/>
    <lineage>
        <taxon>Bacteria</taxon>
        <taxon>Pseudomonadati</taxon>
        <taxon>Pseudomonadota</taxon>
        <taxon>Gammaproteobacteria</taxon>
        <taxon>Enterobacterales</taxon>
        <taxon>Enterobacteriaceae</taxon>
        <taxon>Shigella</taxon>
    </lineage>
</organism>
<dbReference type="EC" id="5.4.99.26"/>
<dbReference type="EMBL" id="AE005674">
    <property type="protein sequence ID" value="AAN44292.1"/>
    <property type="molecule type" value="Genomic_DNA"/>
</dbReference>
<dbReference type="EMBL" id="AE014073">
    <property type="protein sequence ID" value="AAP18117.1"/>
    <property type="molecule type" value="Genomic_DNA"/>
</dbReference>
<dbReference type="RefSeq" id="WP_000890001.1">
    <property type="nucleotide sequence ID" value="NZ_WPGW01000063.1"/>
</dbReference>
<dbReference type="SMR" id="P0AA42"/>
<dbReference type="STRING" id="198214.SF2804"/>
<dbReference type="PaxDb" id="198214-SF2804"/>
<dbReference type="GeneID" id="93779207"/>
<dbReference type="KEGG" id="sfl:SF2804"/>
<dbReference type="KEGG" id="sfx:S2998"/>
<dbReference type="PATRIC" id="fig|198214.7.peg.3338"/>
<dbReference type="HOGENOM" id="CLU_016902_11_4_6"/>
<dbReference type="Proteomes" id="UP000001006">
    <property type="component" value="Chromosome"/>
</dbReference>
<dbReference type="Proteomes" id="UP000002673">
    <property type="component" value="Chromosome"/>
</dbReference>
<dbReference type="GO" id="GO:0003723">
    <property type="term" value="F:RNA binding"/>
    <property type="evidence" value="ECO:0007669"/>
    <property type="project" value="InterPro"/>
</dbReference>
<dbReference type="GO" id="GO:0160149">
    <property type="term" value="F:tRNA pseudouridine(65) synthase activity"/>
    <property type="evidence" value="ECO:0007669"/>
    <property type="project" value="UniProtKB-EC"/>
</dbReference>
<dbReference type="GO" id="GO:0000455">
    <property type="term" value="P:enzyme-directed rRNA pseudouridine synthesis"/>
    <property type="evidence" value="ECO:0007669"/>
    <property type="project" value="TreeGrafter"/>
</dbReference>
<dbReference type="GO" id="GO:0008033">
    <property type="term" value="P:tRNA processing"/>
    <property type="evidence" value="ECO:0007669"/>
    <property type="project" value="UniProtKB-KW"/>
</dbReference>
<dbReference type="CDD" id="cd02563">
    <property type="entry name" value="PseudoU_synth_TruC"/>
    <property type="match status" value="1"/>
</dbReference>
<dbReference type="FunFam" id="3.30.2350.10:FF:000008">
    <property type="entry name" value="tRNA pseudouridine synthase C"/>
    <property type="match status" value="1"/>
</dbReference>
<dbReference type="Gene3D" id="3.30.2350.10">
    <property type="entry name" value="Pseudouridine synthase"/>
    <property type="match status" value="1"/>
</dbReference>
<dbReference type="InterPro" id="IPR020103">
    <property type="entry name" value="PsdUridine_synth_cat_dom_sf"/>
</dbReference>
<dbReference type="InterPro" id="IPR006224">
    <property type="entry name" value="PsdUridine_synth_RluA-like_CS"/>
</dbReference>
<dbReference type="InterPro" id="IPR006145">
    <property type="entry name" value="PsdUridine_synth_RsuA/RluA"/>
</dbReference>
<dbReference type="InterPro" id="IPR050188">
    <property type="entry name" value="RluA_PseudoU_synthase"/>
</dbReference>
<dbReference type="NCBIfam" id="NF008321">
    <property type="entry name" value="PRK11112.1"/>
    <property type="match status" value="1"/>
</dbReference>
<dbReference type="PANTHER" id="PTHR21600">
    <property type="entry name" value="MITOCHONDRIAL RNA PSEUDOURIDINE SYNTHASE"/>
    <property type="match status" value="1"/>
</dbReference>
<dbReference type="PANTHER" id="PTHR21600:SF56">
    <property type="entry name" value="TRNA PSEUDOURIDINE SYNTHASE C"/>
    <property type="match status" value="1"/>
</dbReference>
<dbReference type="Pfam" id="PF00849">
    <property type="entry name" value="PseudoU_synth_2"/>
    <property type="match status" value="1"/>
</dbReference>
<dbReference type="SUPFAM" id="SSF55120">
    <property type="entry name" value="Pseudouridine synthase"/>
    <property type="match status" value="1"/>
</dbReference>
<dbReference type="PROSITE" id="PS01129">
    <property type="entry name" value="PSI_RLU"/>
    <property type="match status" value="1"/>
</dbReference>
<comment type="function">
    <text evidence="1">Responsible for synthesis of pseudouridine from uracil-65 in transfer RNAs.</text>
</comment>
<comment type="catalytic activity">
    <reaction>
        <text>uridine(65) in tRNA = pseudouridine(65) in tRNA</text>
        <dbReference type="Rhea" id="RHEA:42536"/>
        <dbReference type="Rhea" id="RHEA-COMP:10103"/>
        <dbReference type="Rhea" id="RHEA-COMP:10104"/>
        <dbReference type="ChEBI" id="CHEBI:65314"/>
        <dbReference type="ChEBI" id="CHEBI:65315"/>
        <dbReference type="EC" id="5.4.99.26"/>
    </reaction>
</comment>
<comment type="similarity">
    <text evidence="2">Belongs to the pseudouridine synthase RluA family.</text>
</comment>
<sequence>MLEILYQDEWLVAVNKPSGWLVHRSWLDRDEKVVVMQTVRDQIGQHVFTAHRLDRPTSGVLLMGLSSEAGRLLAQQFEQHQIQKRYHAIVRGWLMEEAVLDYPLVEELDKIADKFAREDKGPQPAVTHYRGLATVEMPVATGRYPTTRYGLVELEPKTGRKHQLRRHLAHLRHPIIGDSKHGDLRQNRSGAEHFGLQRLMLHASQLSLTHPFTGEPLTIHAGLDDTWMQALSQFGWRGLLPENERVEFSAPSGQDGEISS</sequence>
<protein>
    <recommendedName>
        <fullName>tRNA pseudouridine synthase C</fullName>
        <ecNumber>5.4.99.26</ecNumber>
    </recommendedName>
    <alternativeName>
        <fullName>tRNA pseudouridine(65) synthase</fullName>
    </alternativeName>
    <alternativeName>
        <fullName>tRNA pseudouridylate synthase C</fullName>
    </alternativeName>
    <alternativeName>
        <fullName>tRNA-uridine isomerase C</fullName>
    </alternativeName>
</protein>
<gene>
    <name type="primary">truC</name>
    <name type="ordered locus">SF2804</name>
    <name type="ordered locus">S2998</name>
</gene>
<accession>P0AA42</accession>
<accession>Q46918</accession>
<name>TRUC_SHIFL</name>